<sequence length="101" mass="11196">MISLNHYLIVAALMFVIGLVGVMKRQNLIMLFFSTEILLNAANVALVAISSFYNDIGGQIFAMFIIAIAASEMAVGLGLLILWYKKRHSIEIDSLSTMRDE</sequence>
<evidence type="ECO:0000255" key="1">
    <source>
        <dbReference type="HAMAP-Rule" id="MF_01456"/>
    </source>
</evidence>
<protein>
    <recommendedName>
        <fullName evidence="1">NADH-quinone oxidoreductase subunit K</fullName>
        <ecNumber evidence="1">7.1.1.-</ecNumber>
    </recommendedName>
    <alternativeName>
        <fullName evidence="1">NADH dehydrogenase I subunit K</fullName>
    </alternativeName>
    <alternativeName>
        <fullName evidence="1">NDH-1 subunit K</fullName>
    </alternativeName>
</protein>
<feature type="chain" id="PRO_0000390006" description="NADH-quinone oxidoreductase subunit K">
    <location>
        <begin position="1"/>
        <end position="101"/>
    </location>
</feature>
<feature type="transmembrane region" description="Helical" evidence="1">
    <location>
        <begin position="2"/>
        <end position="22"/>
    </location>
</feature>
<feature type="transmembrane region" description="Helical" evidence="1">
    <location>
        <begin position="29"/>
        <end position="49"/>
    </location>
</feature>
<feature type="transmembrane region" description="Helical" evidence="1">
    <location>
        <begin position="63"/>
        <end position="83"/>
    </location>
</feature>
<comment type="function">
    <text evidence="1">NDH-1 shuttles electrons from NADH, via FMN and iron-sulfur (Fe-S) centers, to quinones in the respiratory chain. The immediate electron acceptor for the enzyme in this species is believed to be ubiquinone. Couples the redox reaction to proton translocation (for every two electrons transferred, four hydrogen ions are translocated across the cytoplasmic membrane), and thus conserves the redox energy in a proton gradient.</text>
</comment>
<comment type="catalytic activity">
    <reaction evidence="1">
        <text>a quinone + NADH + 5 H(+)(in) = a quinol + NAD(+) + 4 H(+)(out)</text>
        <dbReference type="Rhea" id="RHEA:57888"/>
        <dbReference type="ChEBI" id="CHEBI:15378"/>
        <dbReference type="ChEBI" id="CHEBI:24646"/>
        <dbReference type="ChEBI" id="CHEBI:57540"/>
        <dbReference type="ChEBI" id="CHEBI:57945"/>
        <dbReference type="ChEBI" id="CHEBI:132124"/>
    </reaction>
</comment>
<comment type="subunit">
    <text evidence="1">NDH-1 is composed of 14 different subunits. Subunits NuoA, H, J, K, L, M, N constitute the membrane sector of the complex.</text>
</comment>
<comment type="subcellular location">
    <subcellularLocation>
        <location evidence="1">Cell inner membrane</location>
        <topology evidence="1">Multi-pass membrane protein</topology>
    </subcellularLocation>
</comment>
<comment type="similarity">
    <text evidence="1">Belongs to the complex I subunit 4L family.</text>
</comment>
<name>NUOK_CAMHC</name>
<reference key="1">
    <citation type="submission" date="2007-07" db="EMBL/GenBank/DDBJ databases">
        <title>Complete genome sequence of Campylobacter hominis ATCC BAA-381, a commensal isolated from the human gastrointestinal tract.</title>
        <authorList>
            <person name="Fouts D.E."/>
            <person name="Mongodin E.F."/>
            <person name="Puiu D."/>
            <person name="Sebastian Y."/>
            <person name="Miller W.G."/>
            <person name="Mandrell R.E."/>
            <person name="Nelson K.E."/>
        </authorList>
    </citation>
    <scope>NUCLEOTIDE SEQUENCE [LARGE SCALE GENOMIC DNA]</scope>
    <source>
        <strain>ATCC BAA-381 / DSM 21671 / CCUG 45161 / LMG 19568 / NCTC 13146 / CH001A</strain>
    </source>
</reference>
<dbReference type="EC" id="7.1.1.-" evidence="1"/>
<dbReference type="EMBL" id="CP000776">
    <property type="protein sequence ID" value="ABS52563.1"/>
    <property type="molecule type" value="Genomic_DNA"/>
</dbReference>
<dbReference type="RefSeq" id="WP_012108080.1">
    <property type="nucleotide sequence ID" value="NC_009714.1"/>
</dbReference>
<dbReference type="SMR" id="A7HZV8"/>
<dbReference type="STRING" id="360107.CHAB381_0191"/>
<dbReference type="KEGG" id="cha:CHAB381_0191"/>
<dbReference type="eggNOG" id="COG0713">
    <property type="taxonomic scope" value="Bacteria"/>
</dbReference>
<dbReference type="HOGENOM" id="CLU_144724_0_0_7"/>
<dbReference type="OrthoDB" id="9810120at2"/>
<dbReference type="Proteomes" id="UP000002407">
    <property type="component" value="Chromosome"/>
</dbReference>
<dbReference type="GO" id="GO:0030964">
    <property type="term" value="C:NADH dehydrogenase complex"/>
    <property type="evidence" value="ECO:0007669"/>
    <property type="project" value="TreeGrafter"/>
</dbReference>
<dbReference type="GO" id="GO:0005886">
    <property type="term" value="C:plasma membrane"/>
    <property type="evidence" value="ECO:0007669"/>
    <property type="project" value="UniProtKB-SubCell"/>
</dbReference>
<dbReference type="GO" id="GO:0050136">
    <property type="term" value="F:NADH:ubiquinone reductase (non-electrogenic) activity"/>
    <property type="evidence" value="ECO:0007669"/>
    <property type="project" value="UniProtKB-UniRule"/>
</dbReference>
<dbReference type="GO" id="GO:0048038">
    <property type="term" value="F:quinone binding"/>
    <property type="evidence" value="ECO:0007669"/>
    <property type="project" value="UniProtKB-KW"/>
</dbReference>
<dbReference type="GO" id="GO:0042773">
    <property type="term" value="P:ATP synthesis coupled electron transport"/>
    <property type="evidence" value="ECO:0007669"/>
    <property type="project" value="InterPro"/>
</dbReference>
<dbReference type="FunFam" id="1.10.287.3510:FF:000001">
    <property type="entry name" value="NADH-quinone oxidoreductase subunit K"/>
    <property type="match status" value="1"/>
</dbReference>
<dbReference type="Gene3D" id="1.10.287.3510">
    <property type="match status" value="1"/>
</dbReference>
<dbReference type="HAMAP" id="MF_01456">
    <property type="entry name" value="NDH1_NuoK"/>
    <property type="match status" value="1"/>
</dbReference>
<dbReference type="InterPro" id="IPR001133">
    <property type="entry name" value="NADH_UbQ_OxRdtase_chain4L/K"/>
</dbReference>
<dbReference type="InterPro" id="IPR039428">
    <property type="entry name" value="NUOK/Mnh_C1-like"/>
</dbReference>
<dbReference type="NCBIfam" id="NF004320">
    <property type="entry name" value="PRK05715.1-2"/>
    <property type="match status" value="1"/>
</dbReference>
<dbReference type="NCBIfam" id="NF004323">
    <property type="entry name" value="PRK05715.1-5"/>
    <property type="match status" value="1"/>
</dbReference>
<dbReference type="PANTHER" id="PTHR11434:SF21">
    <property type="entry name" value="NADH DEHYDROGENASE SUBUNIT 4L-RELATED"/>
    <property type="match status" value="1"/>
</dbReference>
<dbReference type="PANTHER" id="PTHR11434">
    <property type="entry name" value="NADH-UBIQUINONE OXIDOREDUCTASE SUBUNIT ND4L"/>
    <property type="match status" value="1"/>
</dbReference>
<dbReference type="Pfam" id="PF00420">
    <property type="entry name" value="Oxidored_q2"/>
    <property type="match status" value="1"/>
</dbReference>
<keyword id="KW-0997">Cell inner membrane</keyword>
<keyword id="KW-1003">Cell membrane</keyword>
<keyword id="KW-0472">Membrane</keyword>
<keyword id="KW-0520">NAD</keyword>
<keyword id="KW-0874">Quinone</keyword>
<keyword id="KW-1185">Reference proteome</keyword>
<keyword id="KW-1278">Translocase</keyword>
<keyword id="KW-0812">Transmembrane</keyword>
<keyword id="KW-1133">Transmembrane helix</keyword>
<keyword id="KW-0813">Transport</keyword>
<keyword id="KW-0830">Ubiquinone</keyword>
<accession>A7HZV8</accession>
<proteinExistence type="inferred from homology"/>
<organism>
    <name type="scientific">Campylobacter hominis (strain ATCC BAA-381 / DSM 21671 / CCUG 45161 / LMG 19568 / NCTC 13146 / CH001A)</name>
    <dbReference type="NCBI Taxonomy" id="360107"/>
    <lineage>
        <taxon>Bacteria</taxon>
        <taxon>Pseudomonadati</taxon>
        <taxon>Campylobacterota</taxon>
        <taxon>Epsilonproteobacteria</taxon>
        <taxon>Campylobacterales</taxon>
        <taxon>Campylobacteraceae</taxon>
        <taxon>Campylobacter</taxon>
    </lineage>
</organism>
<gene>
    <name evidence="1" type="primary">nuoK</name>
    <name type="ordered locus">CHAB381_0191</name>
</gene>